<feature type="chain" id="PRO_1000117879" description="4-diphosphocytidyl-2-C-methyl-D-erythritol kinase">
    <location>
        <begin position="1"/>
        <end position="289"/>
    </location>
</feature>
<feature type="active site" evidence="1">
    <location>
        <position position="10"/>
    </location>
</feature>
<feature type="active site" evidence="1">
    <location>
        <position position="136"/>
    </location>
</feature>
<feature type="binding site" evidence="1">
    <location>
        <begin position="94"/>
        <end position="104"/>
    </location>
    <ligand>
        <name>ATP</name>
        <dbReference type="ChEBI" id="CHEBI:30616"/>
    </ligand>
</feature>
<protein>
    <recommendedName>
        <fullName evidence="1">4-diphosphocytidyl-2-C-methyl-D-erythritol kinase</fullName>
        <shortName evidence="1">CMK</shortName>
        <ecNumber evidence="1">2.7.1.148</ecNumber>
    </recommendedName>
    <alternativeName>
        <fullName evidence="1">4-(cytidine-5'-diphospho)-2-C-methyl-D-erythritol kinase</fullName>
    </alternativeName>
</protein>
<keyword id="KW-0067">ATP-binding</keyword>
<keyword id="KW-0414">Isoprene biosynthesis</keyword>
<keyword id="KW-0418">Kinase</keyword>
<keyword id="KW-0547">Nucleotide-binding</keyword>
<keyword id="KW-0808">Transferase</keyword>
<sequence length="289" mass="31593">MKLLVKAPAKINLSLDVLGKRQDGYHEVKMIMTTIDLADRLELMELAEDRIEILSHNRYVPDDQRNLAYQAAKLLKEKFNVKKGVSITIEKTIPVAAGLAGGSSDAAATLRGLNKLWNLGLTIDQLAELGAEIGSDVSFCVYGGTAIATGRGEQIEHIKTPPSCWVILAKPHIGVSTADVYGNLKLNRVTHPNVDKMVDVINAGDYKGICDTVGNVLEDVTFAMHPEVARIKAQMKRFGADAVLMSGSGPTVFGLVHHDSRMHRIYNGLKGFCEQVYAVRLLGERETLE</sequence>
<accession>C1ESX4</accession>
<gene>
    <name evidence="1" type="primary">ispE</name>
    <name type="ordered locus">BCA_0054</name>
</gene>
<dbReference type="EC" id="2.7.1.148" evidence="1"/>
<dbReference type="EMBL" id="CP001407">
    <property type="protein sequence ID" value="ACO25962.1"/>
    <property type="molecule type" value="Genomic_DNA"/>
</dbReference>
<dbReference type="SMR" id="C1ESX4"/>
<dbReference type="KEGG" id="bcx:BCA_0054"/>
<dbReference type="PATRIC" id="fig|572264.18.peg.107"/>
<dbReference type="UniPathway" id="UPA00056">
    <property type="reaction ID" value="UER00094"/>
</dbReference>
<dbReference type="Proteomes" id="UP000002210">
    <property type="component" value="Chromosome"/>
</dbReference>
<dbReference type="GO" id="GO:0050515">
    <property type="term" value="F:4-(cytidine 5'-diphospho)-2-C-methyl-D-erythritol kinase activity"/>
    <property type="evidence" value="ECO:0007669"/>
    <property type="project" value="UniProtKB-UniRule"/>
</dbReference>
<dbReference type="GO" id="GO:0005524">
    <property type="term" value="F:ATP binding"/>
    <property type="evidence" value="ECO:0007669"/>
    <property type="project" value="UniProtKB-UniRule"/>
</dbReference>
<dbReference type="GO" id="GO:0019288">
    <property type="term" value="P:isopentenyl diphosphate biosynthetic process, methylerythritol 4-phosphate pathway"/>
    <property type="evidence" value="ECO:0007669"/>
    <property type="project" value="UniProtKB-UniRule"/>
</dbReference>
<dbReference type="GO" id="GO:0016114">
    <property type="term" value="P:terpenoid biosynthetic process"/>
    <property type="evidence" value="ECO:0007669"/>
    <property type="project" value="InterPro"/>
</dbReference>
<dbReference type="FunFam" id="3.30.230.10:FF:000029">
    <property type="entry name" value="4-diphosphocytidyl-2-C-methyl-D-erythritol kinase"/>
    <property type="match status" value="1"/>
</dbReference>
<dbReference type="FunFam" id="3.30.70.890:FF:000006">
    <property type="entry name" value="4-diphosphocytidyl-2-C-methyl-D-erythritol kinase"/>
    <property type="match status" value="1"/>
</dbReference>
<dbReference type="Gene3D" id="3.30.230.10">
    <property type="match status" value="1"/>
</dbReference>
<dbReference type="Gene3D" id="3.30.70.890">
    <property type="entry name" value="GHMP kinase, C-terminal domain"/>
    <property type="match status" value="1"/>
</dbReference>
<dbReference type="HAMAP" id="MF_00061">
    <property type="entry name" value="IspE"/>
    <property type="match status" value="1"/>
</dbReference>
<dbReference type="InterPro" id="IPR013750">
    <property type="entry name" value="GHMP_kinase_C_dom"/>
</dbReference>
<dbReference type="InterPro" id="IPR036554">
    <property type="entry name" value="GHMP_kinase_C_sf"/>
</dbReference>
<dbReference type="InterPro" id="IPR006204">
    <property type="entry name" value="GHMP_kinase_N_dom"/>
</dbReference>
<dbReference type="InterPro" id="IPR004424">
    <property type="entry name" value="IspE"/>
</dbReference>
<dbReference type="InterPro" id="IPR020568">
    <property type="entry name" value="Ribosomal_Su5_D2-typ_SF"/>
</dbReference>
<dbReference type="InterPro" id="IPR014721">
    <property type="entry name" value="Ribsml_uS5_D2-typ_fold_subgr"/>
</dbReference>
<dbReference type="NCBIfam" id="TIGR00154">
    <property type="entry name" value="ispE"/>
    <property type="match status" value="1"/>
</dbReference>
<dbReference type="NCBIfam" id="NF011202">
    <property type="entry name" value="PRK14608.1"/>
    <property type="match status" value="1"/>
</dbReference>
<dbReference type="PANTHER" id="PTHR43527">
    <property type="entry name" value="4-DIPHOSPHOCYTIDYL-2-C-METHYL-D-ERYTHRITOL KINASE, CHLOROPLASTIC"/>
    <property type="match status" value="1"/>
</dbReference>
<dbReference type="PANTHER" id="PTHR43527:SF2">
    <property type="entry name" value="4-DIPHOSPHOCYTIDYL-2-C-METHYL-D-ERYTHRITOL KINASE, CHLOROPLASTIC"/>
    <property type="match status" value="1"/>
</dbReference>
<dbReference type="Pfam" id="PF08544">
    <property type="entry name" value="GHMP_kinases_C"/>
    <property type="match status" value="1"/>
</dbReference>
<dbReference type="Pfam" id="PF00288">
    <property type="entry name" value="GHMP_kinases_N"/>
    <property type="match status" value="1"/>
</dbReference>
<dbReference type="PIRSF" id="PIRSF010376">
    <property type="entry name" value="IspE"/>
    <property type="match status" value="1"/>
</dbReference>
<dbReference type="SUPFAM" id="SSF55060">
    <property type="entry name" value="GHMP Kinase, C-terminal domain"/>
    <property type="match status" value="1"/>
</dbReference>
<dbReference type="SUPFAM" id="SSF54211">
    <property type="entry name" value="Ribosomal protein S5 domain 2-like"/>
    <property type="match status" value="1"/>
</dbReference>
<evidence type="ECO:0000255" key="1">
    <source>
        <dbReference type="HAMAP-Rule" id="MF_00061"/>
    </source>
</evidence>
<organism>
    <name type="scientific">Bacillus cereus (strain 03BB102)</name>
    <dbReference type="NCBI Taxonomy" id="572264"/>
    <lineage>
        <taxon>Bacteria</taxon>
        <taxon>Bacillati</taxon>
        <taxon>Bacillota</taxon>
        <taxon>Bacilli</taxon>
        <taxon>Bacillales</taxon>
        <taxon>Bacillaceae</taxon>
        <taxon>Bacillus</taxon>
        <taxon>Bacillus cereus group</taxon>
    </lineage>
</organism>
<reference key="1">
    <citation type="submission" date="2009-02" db="EMBL/GenBank/DDBJ databases">
        <title>Genome sequence of Bacillus cereus 03BB102.</title>
        <authorList>
            <person name="Dodson R.J."/>
            <person name="Jackson P."/>
            <person name="Munk A.C."/>
            <person name="Brettin T."/>
            <person name="Bruce D."/>
            <person name="Detter C."/>
            <person name="Tapia R."/>
            <person name="Han C."/>
            <person name="Sutton G."/>
            <person name="Sims D."/>
        </authorList>
    </citation>
    <scope>NUCLEOTIDE SEQUENCE [LARGE SCALE GENOMIC DNA]</scope>
    <source>
        <strain>03BB102</strain>
    </source>
</reference>
<comment type="function">
    <text evidence="1">Catalyzes the phosphorylation of the position 2 hydroxy group of 4-diphosphocytidyl-2C-methyl-D-erythritol.</text>
</comment>
<comment type="catalytic activity">
    <reaction evidence="1">
        <text>4-CDP-2-C-methyl-D-erythritol + ATP = 4-CDP-2-C-methyl-D-erythritol 2-phosphate + ADP + H(+)</text>
        <dbReference type="Rhea" id="RHEA:18437"/>
        <dbReference type="ChEBI" id="CHEBI:15378"/>
        <dbReference type="ChEBI" id="CHEBI:30616"/>
        <dbReference type="ChEBI" id="CHEBI:57823"/>
        <dbReference type="ChEBI" id="CHEBI:57919"/>
        <dbReference type="ChEBI" id="CHEBI:456216"/>
        <dbReference type="EC" id="2.7.1.148"/>
    </reaction>
</comment>
<comment type="pathway">
    <text evidence="1">Isoprenoid biosynthesis; isopentenyl diphosphate biosynthesis via DXP pathway; isopentenyl diphosphate from 1-deoxy-D-xylulose 5-phosphate: step 3/6.</text>
</comment>
<comment type="similarity">
    <text evidence="1">Belongs to the GHMP kinase family. IspE subfamily.</text>
</comment>
<name>ISPE_BACC3</name>
<proteinExistence type="inferred from homology"/>